<feature type="chain" id="PRO_0000317535" description="Phospholipid phosphatase-related protein type 1">
    <location>
        <begin position="1"/>
        <end position="333"/>
    </location>
</feature>
<feature type="transmembrane region" description="Helical" evidence="3">
    <location>
        <begin position="12"/>
        <end position="32"/>
    </location>
</feature>
<feature type="transmembrane region" description="Helical" evidence="3">
    <location>
        <begin position="66"/>
        <end position="86"/>
    </location>
</feature>
<feature type="transmembrane region" description="Helical" evidence="3">
    <location>
        <begin position="126"/>
        <end position="146"/>
    </location>
</feature>
<feature type="transmembrane region" description="Helical" evidence="3">
    <location>
        <begin position="200"/>
        <end position="217"/>
    </location>
</feature>
<feature type="transmembrane region" description="Helical" evidence="3">
    <location>
        <begin position="223"/>
        <end position="243"/>
    </location>
</feature>
<feature type="transmembrane region" description="Helical" evidence="3">
    <location>
        <begin position="256"/>
        <end position="276"/>
    </location>
</feature>
<feature type="glycosylation site" description="N-linked (GlcNAc...) asparagine" evidence="3">
    <location>
        <position position="162"/>
    </location>
</feature>
<evidence type="ECO:0000250" key="1">
    <source>
        <dbReference type="UniProtKB" id="Q6WAY2"/>
    </source>
</evidence>
<evidence type="ECO:0000250" key="2">
    <source>
        <dbReference type="UniProtKB" id="Q8TBJ4"/>
    </source>
</evidence>
<evidence type="ECO:0000255" key="3"/>
<evidence type="ECO:0000305" key="4"/>
<keyword id="KW-1003">Cell membrane</keyword>
<keyword id="KW-0966">Cell projection</keyword>
<keyword id="KW-0325">Glycoprotein</keyword>
<keyword id="KW-0472">Membrane</keyword>
<keyword id="KW-1185">Reference proteome</keyword>
<keyword id="KW-0812">Transmembrane</keyword>
<keyword id="KW-1133">Transmembrane helix</keyword>
<organism>
    <name type="scientific">Danio rerio</name>
    <name type="common">Zebrafish</name>
    <name type="synonym">Brachydanio rerio</name>
    <dbReference type="NCBI Taxonomy" id="7955"/>
    <lineage>
        <taxon>Eukaryota</taxon>
        <taxon>Metazoa</taxon>
        <taxon>Chordata</taxon>
        <taxon>Craniata</taxon>
        <taxon>Vertebrata</taxon>
        <taxon>Euteleostomi</taxon>
        <taxon>Actinopterygii</taxon>
        <taxon>Neopterygii</taxon>
        <taxon>Teleostei</taxon>
        <taxon>Ostariophysi</taxon>
        <taxon>Cypriniformes</taxon>
        <taxon>Danionidae</taxon>
        <taxon>Danioninae</taxon>
        <taxon>Danio</taxon>
    </lineage>
</organism>
<comment type="function">
    <text evidence="1">May play a role in neurite outgrowth and neurogenesis.</text>
</comment>
<comment type="subcellular location">
    <subcellularLocation>
        <location evidence="1">Cell membrane</location>
        <topology evidence="3">Multi-pass membrane protein</topology>
    </subcellularLocation>
    <subcellularLocation>
        <location evidence="1">Cell projection</location>
        <location evidence="1">Neuron projection</location>
    </subcellularLocation>
</comment>
<comment type="similarity">
    <text evidence="4">Belongs to the PA-phosphatase related phosphoesterase family.</text>
</comment>
<comment type="caution">
    <text evidence="1">Has no 2-lysophosphatidate/LPA phosphatase activity. This is supported by the fact that the phosphatase sequence motifs as well as the His residue acting as a nucleophile in active phosphatases of the PA-phosphatase related phosphoesterase family are not conserved.</text>
</comment>
<dbReference type="EMBL" id="BC071430">
    <property type="protein sequence ID" value="AAH71430.1"/>
    <property type="molecule type" value="mRNA"/>
</dbReference>
<dbReference type="RefSeq" id="NP_001002132.1">
    <property type="nucleotide sequence ID" value="NM_001002132.1"/>
</dbReference>
<dbReference type="FunCoup" id="Q6IQH6">
    <property type="interactions" value="14"/>
</dbReference>
<dbReference type="STRING" id="7955.ENSDARP00000141852"/>
<dbReference type="GlyCosmos" id="Q6IQH6">
    <property type="glycosylation" value="1 site, No reported glycans"/>
</dbReference>
<dbReference type="GeneID" id="415222"/>
<dbReference type="KEGG" id="dre:415222"/>
<dbReference type="AGR" id="ZFIN:ZDB-GENE-040625-138"/>
<dbReference type="CTD" id="54886"/>
<dbReference type="ZFIN" id="ZDB-GENE-040625-138">
    <property type="gene designation" value="plppr1"/>
</dbReference>
<dbReference type="InParanoid" id="Q6IQH6"/>
<dbReference type="OrthoDB" id="10030083at2759"/>
<dbReference type="PhylomeDB" id="Q6IQH6"/>
<dbReference type="PRO" id="PR:Q6IQH6"/>
<dbReference type="Proteomes" id="UP000000437">
    <property type="component" value="Chromosome 10"/>
</dbReference>
<dbReference type="GO" id="GO:0043005">
    <property type="term" value="C:neuron projection"/>
    <property type="evidence" value="ECO:0000250"/>
    <property type="project" value="UniProtKB"/>
</dbReference>
<dbReference type="GO" id="GO:0005886">
    <property type="term" value="C:plasma membrane"/>
    <property type="evidence" value="ECO:0000250"/>
    <property type="project" value="UniProtKB"/>
</dbReference>
<dbReference type="GO" id="GO:0008195">
    <property type="term" value="F:phosphatidate phosphatase activity"/>
    <property type="evidence" value="ECO:0000318"/>
    <property type="project" value="GO_Central"/>
</dbReference>
<dbReference type="GO" id="GO:0007399">
    <property type="term" value="P:nervous system development"/>
    <property type="evidence" value="ECO:0000250"/>
    <property type="project" value="UniProtKB"/>
</dbReference>
<dbReference type="GO" id="GO:0046839">
    <property type="term" value="P:phospholipid dephosphorylation"/>
    <property type="evidence" value="ECO:0000318"/>
    <property type="project" value="GO_Central"/>
</dbReference>
<dbReference type="GO" id="GO:0006644">
    <property type="term" value="P:phospholipid metabolic process"/>
    <property type="evidence" value="ECO:0000318"/>
    <property type="project" value="GO_Central"/>
</dbReference>
<dbReference type="GO" id="GO:0007165">
    <property type="term" value="P:signal transduction"/>
    <property type="evidence" value="ECO:0000318"/>
    <property type="project" value="GO_Central"/>
</dbReference>
<dbReference type="CDD" id="cd03384">
    <property type="entry name" value="PAP2_wunen"/>
    <property type="match status" value="1"/>
</dbReference>
<dbReference type="FunFam" id="1.20.144.10:FF:000005">
    <property type="entry name" value="phospholipid phosphatase-related protein type 1"/>
    <property type="match status" value="1"/>
</dbReference>
<dbReference type="Gene3D" id="1.20.144.10">
    <property type="entry name" value="Phosphatidic acid phosphatase type 2/haloperoxidase"/>
    <property type="match status" value="1"/>
</dbReference>
<dbReference type="InterPro" id="IPR036938">
    <property type="entry name" value="P_Acid_Pase_2/haloperoxi_sf"/>
</dbReference>
<dbReference type="InterPro" id="IPR000326">
    <property type="entry name" value="P_Acid_Pase_2/haloperoxidase"/>
</dbReference>
<dbReference type="InterPro" id="IPR043216">
    <property type="entry name" value="PA_PP_rel"/>
</dbReference>
<dbReference type="PANTHER" id="PTHR10165">
    <property type="entry name" value="LIPID PHOSPHATE PHOSPHATASE"/>
    <property type="match status" value="1"/>
</dbReference>
<dbReference type="PANTHER" id="PTHR10165:SF41">
    <property type="entry name" value="PHOSPHOLIPID PHOSPHATASE-RELATED PROTEIN TYPE 1"/>
    <property type="match status" value="1"/>
</dbReference>
<dbReference type="Pfam" id="PF01569">
    <property type="entry name" value="PAP2"/>
    <property type="match status" value="1"/>
</dbReference>
<dbReference type="SMART" id="SM00014">
    <property type="entry name" value="acidPPc"/>
    <property type="match status" value="1"/>
</dbReference>
<dbReference type="SUPFAM" id="SSF48317">
    <property type="entry name" value="Acid phosphatase/Vanadium-dependent haloperoxidase"/>
    <property type="match status" value="1"/>
</dbReference>
<sequence length="333" mass="36492">MASDNTHRSYSIIPCFIFVELVIMAGTVLLAYYFECTDTFGIHIQGFFCNDADLLKPYPGPEESSFIQPLILYCVVAAAPTAIIFVGEISMYIMKSTGEALLAQEKTIVTGECCYLNPLIRRIIRFIGVFAFGLFATDIFVNAGQVVTGNLAPYFLNVCKPNYTGLDCHFSHQFIANGNICTGNQVVVERARRSFPSKDASLSVYSAVYVTMYITSTIKTKSSRLAKPVLCLGLLCAAFLTGLNRVSEYRNHCSDVVAGFILGSSIALFLGICVVNNFKGTHSTPTKQKQEDYRGLPLMTFPRVESPLETLSAQGKSCQATLLTSSQPNTWSA</sequence>
<name>PLPR1_DANRE</name>
<proteinExistence type="evidence at transcript level"/>
<protein>
    <recommendedName>
        <fullName evidence="2">Phospholipid phosphatase-related protein type 1</fullName>
    </recommendedName>
    <alternativeName>
        <fullName evidence="1">Inactive 2-lysophosphatidate phosphatase PLPPR1</fullName>
    </alternativeName>
    <alternativeName>
        <fullName evidence="2">Lipid phosphate phosphatase-related protein type 1</fullName>
    </alternativeName>
</protein>
<reference key="1">
    <citation type="submission" date="2004-06" db="EMBL/GenBank/DDBJ databases">
        <authorList>
            <consortium name="NIH - Zebrafish Gene Collection (ZGC) project"/>
        </authorList>
    </citation>
    <scope>NUCLEOTIDE SEQUENCE [LARGE SCALE MRNA]</scope>
    <source>
        <tissue>Embryo</tissue>
    </source>
</reference>
<accession>Q6IQH6</accession>
<gene>
    <name type="primary">plppr1</name>
    <name evidence="2" type="synonym">lppr1</name>
    <name type="ORF">zgc:86759</name>
</gene>